<reference key="1">
    <citation type="journal article" date="2005" name="Infect. Immun.">
        <title>Whole-genome analyses of speciation events in pathogenic Brucellae.</title>
        <authorList>
            <person name="Chain P.S."/>
            <person name="Comerci D.J."/>
            <person name="Tolmasky M.E."/>
            <person name="Larimer F.W."/>
            <person name="Malfatti S.A."/>
            <person name="Vergez L.M."/>
            <person name="Aguero F."/>
            <person name="Land M.L."/>
            <person name="Ugalde R.A."/>
            <person name="Garcia E."/>
        </authorList>
    </citation>
    <scope>NUCLEOTIDE SEQUENCE [LARGE SCALE GENOMIC DNA]</scope>
    <source>
        <strain>2308</strain>
    </source>
</reference>
<sequence>MRVSVFAVGRMKSGPERELVERYFDRFAKAGPPLGLEFAGVSEIPESRGQTAQLRKAEEAQRIHEALDNAKSGGTSSGGAALILLDERGKTLGSEAFAAIVGRMRDDGKRQLIVAIGGPDGHDPALRSRADLVLALGELTWPHQIARILIAEQLYRAATILAGHPYHRS</sequence>
<comment type="function">
    <text evidence="1">Specifically methylates the pseudouridine at position 1915 (m3Psi1915) in 23S rRNA.</text>
</comment>
<comment type="catalytic activity">
    <reaction evidence="1">
        <text>pseudouridine(1915) in 23S rRNA + S-adenosyl-L-methionine = N(3)-methylpseudouridine(1915) in 23S rRNA + S-adenosyl-L-homocysteine + H(+)</text>
        <dbReference type="Rhea" id="RHEA:42752"/>
        <dbReference type="Rhea" id="RHEA-COMP:10221"/>
        <dbReference type="Rhea" id="RHEA-COMP:10222"/>
        <dbReference type="ChEBI" id="CHEBI:15378"/>
        <dbReference type="ChEBI" id="CHEBI:57856"/>
        <dbReference type="ChEBI" id="CHEBI:59789"/>
        <dbReference type="ChEBI" id="CHEBI:65314"/>
        <dbReference type="ChEBI" id="CHEBI:74486"/>
        <dbReference type="EC" id="2.1.1.177"/>
    </reaction>
</comment>
<comment type="subunit">
    <text evidence="1">Homodimer.</text>
</comment>
<comment type="subcellular location">
    <subcellularLocation>
        <location evidence="1">Cytoplasm</location>
    </subcellularLocation>
</comment>
<comment type="similarity">
    <text evidence="1">Belongs to the RNA methyltransferase RlmH family.</text>
</comment>
<name>RLMH_BRUA2</name>
<accession>Q2YLJ0</accession>
<dbReference type="EC" id="2.1.1.177" evidence="1"/>
<dbReference type="EMBL" id="AM040264">
    <property type="protein sequence ID" value="CAJ11804.1"/>
    <property type="molecule type" value="Genomic_DNA"/>
</dbReference>
<dbReference type="RefSeq" id="WP_002964918.1">
    <property type="nucleotide sequence ID" value="NZ_KN046823.1"/>
</dbReference>
<dbReference type="SMR" id="Q2YLJ0"/>
<dbReference type="STRING" id="359391.BAB1_1848"/>
<dbReference type="GeneID" id="93017823"/>
<dbReference type="KEGG" id="bmf:BAB1_1848"/>
<dbReference type="PATRIC" id="fig|359391.11.peg.362"/>
<dbReference type="HOGENOM" id="CLU_100552_1_1_5"/>
<dbReference type="PhylomeDB" id="Q2YLJ0"/>
<dbReference type="Proteomes" id="UP000002719">
    <property type="component" value="Chromosome I"/>
</dbReference>
<dbReference type="GO" id="GO:0005737">
    <property type="term" value="C:cytoplasm"/>
    <property type="evidence" value="ECO:0007669"/>
    <property type="project" value="UniProtKB-SubCell"/>
</dbReference>
<dbReference type="GO" id="GO:0070038">
    <property type="term" value="F:rRNA (pseudouridine-N3-)-methyltransferase activity"/>
    <property type="evidence" value="ECO:0007669"/>
    <property type="project" value="UniProtKB-UniRule"/>
</dbReference>
<dbReference type="CDD" id="cd18081">
    <property type="entry name" value="RlmH-like"/>
    <property type="match status" value="1"/>
</dbReference>
<dbReference type="Gene3D" id="3.40.1280.10">
    <property type="match status" value="1"/>
</dbReference>
<dbReference type="HAMAP" id="MF_00658">
    <property type="entry name" value="23SrRNA_methyltr_H"/>
    <property type="match status" value="1"/>
</dbReference>
<dbReference type="InterPro" id="IPR029028">
    <property type="entry name" value="Alpha/beta_knot_MTases"/>
</dbReference>
<dbReference type="InterPro" id="IPR003742">
    <property type="entry name" value="RlmH-like"/>
</dbReference>
<dbReference type="InterPro" id="IPR029026">
    <property type="entry name" value="tRNA_m1G_MTases_N"/>
</dbReference>
<dbReference type="NCBIfam" id="NF000989">
    <property type="entry name" value="PRK00103.2-3"/>
    <property type="match status" value="1"/>
</dbReference>
<dbReference type="PANTHER" id="PTHR33603">
    <property type="entry name" value="METHYLTRANSFERASE"/>
    <property type="match status" value="1"/>
</dbReference>
<dbReference type="PANTHER" id="PTHR33603:SF1">
    <property type="entry name" value="RIBOSOMAL RNA LARGE SUBUNIT METHYLTRANSFERASE H"/>
    <property type="match status" value="1"/>
</dbReference>
<dbReference type="Pfam" id="PF02590">
    <property type="entry name" value="SPOUT_MTase"/>
    <property type="match status" value="1"/>
</dbReference>
<dbReference type="PIRSF" id="PIRSF004505">
    <property type="entry name" value="MT_bac"/>
    <property type="match status" value="1"/>
</dbReference>
<dbReference type="SUPFAM" id="SSF75217">
    <property type="entry name" value="alpha/beta knot"/>
    <property type="match status" value="1"/>
</dbReference>
<feature type="chain" id="PRO_0000260537" description="Ribosomal RNA large subunit methyltransferase H">
    <location>
        <begin position="1"/>
        <end position="169"/>
    </location>
</feature>
<feature type="binding site" evidence="1">
    <location>
        <position position="85"/>
    </location>
    <ligand>
        <name>S-adenosyl-L-methionine</name>
        <dbReference type="ChEBI" id="CHEBI:59789"/>
    </ligand>
</feature>
<feature type="binding site" evidence="1">
    <location>
        <position position="117"/>
    </location>
    <ligand>
        <name>S-adenosyl-L-methionine</name>
        <dbReference type="ChEBI" id="CHEBI:59789"/>
    </ligand>
</feature>
<feature type="binding site" evidence="1">
    <location>
        <begin position="136"/>
        <end position="141"/>
    </location>
    <ligand>
        <name>S-adenosyl-L-methionine</name>
        <dbReference type="ChEBI" id="CHEBI:59789"/>
    </ligand>
</feature>
<protein>
    <recommendedName>
        <fullName evidence="1">Ribosomal RNA large subunit methyltransferase H</fullName>
        <ecNumber evidence="1">2.1.1.177</ecNumber>
    </recommendedName>
    <alternativeName>
        <fullName evidence="1">23S rRNA (pseudouridine1915-N3)-methyltransferase</fullName>
    </alternativeName>
    <alternativeName>
        <fullName evidence="1">23S rRNA m3Psi1915 methyltransferase</fullName>
    </alternativeName>
    <alternativeName>
        <fullName evidence="1">rRNA (pseudouridine-N3-)-methyltransferase RlmH</fullName>
    </alternativeName>
</protein>
<organism>
    <name type="scientific">Brucella abortus (strain 2308)</name>
    <dbReference type="NCBI Taxonomy" id="359391"/>
    <lineage>
        <taxon>Bacteria</taxon>
        <taxon>Pseudomonadati</taxon>
        <taxon>Pseudomonadota</taxon>
        <taxon>Alphaproteobacteria</taxon>
        <taxon>Hyphomicrobiales</taxon>
        <taxon>Brucellaceae</taxon>
        <taxon>Brucella/Ochrobactrum group</taxon>
        <taxon>Brucella</taxon>
    </lineage>
</organism>
<evidence type="ECO:0000255" key="1">
    <source>
        <dbReference type="HAMAP-Rule" id="MF_00658"/>
    </source>
</evidence>
<proteinExistence type="inferred from homology"/>
<keyword id="KW-0963">Cytoplasm</keyword>
<keyword id="KW-0489">Methyltransferase</keyword>
<keyword id="KW-1185">Reference proteome</keyword>
<keyword id="KW-0698">rRNA processing</keyword>
<keyword id="KW-0949">S-adenosyl-L-methionine</keyword>
<keyword id="KW-0808">Transferase</keyword>
<gene>
    <name evidence="1" type="primary">rlmH</name>
    <name type="ordered locus">BAB1_1848</name>
</gene>